<accession>Q8W4L3</accession>
<accession>O65280</accession>
<dbReference type="EC" id="2.7.11.1" evidence="7"/>
<dbReference type="EMBL" id="AF058919">
    <property type="protein sequence ID" value="AAC13615.1"/>
    <property type="status" value="ALT_SEQ"/>
    <property type="molecule type" value="Genomic_DNA"/>
</dbReference>
<dbReference type="EMBL" id="AL161472">
    <property type="protein sequence ID" value="CAB80880.1"/>
    <property type="status" value="ALT_SEQ"/>
    <property type="molecule type" value="Genomic_DNA"/>
</dbReference>
<dbReference type="EMBL" id="CP002687">
    <property type="protein sequence ID" value="AEE81924.1"/>
    <property type="molecule type" value="Genomic_DNA"/>
</dbReference>
<dbReference type="EMBL" id="CP002687">
    <property type="protein sequence ID" value="ANM67341.1"/>
    <property type="molecule type" value="Genomic_DNA"/>
</dbReference>
<dbReference type="EMBL" id="AY062495">
    <property type="protein sequence ID" value="AAL32573.1"/>
    <property type="molecule type" value="mRNA"/>
</dbReference>
<dbReference type="EMBL" id="AY093275">
    <property type="protein sequence ID" value="AAM13274.1"/>
    <property type="molecule type" value="mRNA"/>
</dbReference>
<dbReference type="PIR" id="T01235">
    <property type="entry name" value="T01235"/>
</dbReference>
<dbReference type="RefSeq" id="NP_001329175.1">
    <property type="nucleotide sequence ID" value="NM_001340265.1"/>
</dbReference>
<dbReference type="RefSeq" id="NP_191980.2">
    <property type="nucleotide sequence ID" value="NM_116296.4"/>
</dbReference>
<dbReference type="SMR" id="Q8W4L3"/>
<dbReference type="FunCoup" id="Q8W4L3">
    <property type="interactions" value="1257"/>
</dbReference>
<dbReference type="IntAct" id="Q8W4L3">
    <property type="interactions" value="2"/>
</dbReference>
<dbReference type="STRING" id="3702.Q8W4L3"/>
<dbReference type="GlyGen" id="Q8W4L3">
    <property type="glycosylation" value="1 site"/>
</dbReference>
<dbReference type="iPTMnet" id="Q8W4L3"/>
<dbReference type="PaxDb" id="3702-AT4G00710.1"/>
<dbReference type="ProteomicsDB" id="240508"/>
<dbReference type="EnsemblPlants" id="AT4G00710.1">
    <property type="protein sequence ID" value="AT4G00710.1"/>
    <property type="gene ID" value="AT4G00710"/>
</dbReference>
<dbReference type="EnsemblPlants" id="AT4G00710.2">
    <property type="protein sequence ID" value="AT4G00710.2"/>
    <property type="gene ID" value="AT4G00710"/>
</dbReference>
<dbReference type="GeneID" id="828025"/>
<dbReference type="Gramene" id="AT4G00710.1">
    <property type="protein sequence ID" value="AT4G00710.1"/>
    <property type="gene ID" value="AT4G00710"/>
</dbReference>
<dbReference type="Gramene" id="AT4G00710.2">
    <property type="protein sequence ID" value="AT4G00710.2"/>
    <property type="gene ID" value="AT4G00710"/>
</dbReference>
<dbReference type="KEGG" id="ath:AT4G00710"/>
<dbReference type="Araport" id="AT4G00710"/>
<dbReference type="TAIR" id="AT4G00710">
    <property type="gene designation" value="BSK3"/>
</dbReference>
<dbReference type="eggNOG" id="ENOG502QSE9">
    <property type="taxonomic scope" value="Eukaryota"/>
</dbReference>
<dbReference type="HOGENOM" id="CLU_000288_15_0_1"/>
<dbReference type="InParanoid" id="Q8W4L3"/>
<dbReference type="OMA" id="FHEFTID"/>
<dbReference type="PhylomeDB" id="Q8W4L3"/>
<dbReference type="PRO" id="PR:Q8W4L3"/>
<dbReference type="Proteomes" id="UP000006548">
    <property type="component" value="Chromosome 4"/>
</dbReference>
<dbReference type="ExpressionAtlas" id="Q8W4L3">
    <property type="expression patterns" value="baseline and differential"/>
</dbReference>
<dbReference type="GO" id="GO:0005829">
    <property type="term" value="C:cytosol"/>
    <property type="evidence" value="ECO:0007005"/>
    <property type="project" value="TAIR"/>
</dbReference>
<dbReference type="GO" id="GO:0005886">
    <property type="term" value="C:plasma membrane"/>
    <property type="evidence" value="ECO:0007669"/>
    <property type="project" value="UniProtKB-SubCell"/>
</dbReference>
<dbReference type="GO" id="GO:0009506">
    <property type="term" value="C:plasmodesma"/>
    <property type="evidence" value="ECO:0007005"/>
    <property type="project" value="TAIR"/>
</dbReference>
<dbReference type="GO" id="GO:0005524">
    <property type="term" value="F:ATP binding"/>
    <property type="evidence" value="ECO:0007669"/>
    <property type="project" value="UniProtKB-KW"/>
</dbReference>
<dbReference type="GO" id="GO:0106310">
    <property type="term" value="F:protein serine kinase activity"/>
    <property type="evidence" value="ECO:0007669"/>
    <property type="project" value="RHEA"/>
</dbReference>
<dbReference type="GO" id="GO:0004674">
    <property type="term" value="F:protein serine/threonine kinase activity"/>
    <property type="evidence" value="ECO:0007669"/>
    <property type="project" value="UniProtKB-KW"/>
</dbReference>
<dbReference type="GO" id="GO:0009742">
    <property type="term" value="P:brassinosteroid mediated signaling pathway"/>
    <property type="evidence" value="ECO:0000315"/>
    <property type="project" value="UniProtKB"/>
</dbReference>
<dbReference type="FunFam" id="1.25.40.10:FF:000016">
    <property type="entry name" value="probable serine/threonine-protein kinase At4g35230"/>
    <property type="match status" value="1"/>
</dbReference>
<dbReference type="FunFam" id="3.30.200.20:FF:000154">
    <property type="entry name" value="probable serine/threonine-protein kinase At4g35230"/>
    <property type="match status" value="1"/>
</dbReference>
<dbReference type="FunFam" id="1.10.510.10:FF:000069">
    <property type="entry name" value="probable serine/threonine-protein kinase At5g41260"/>
    <property type="match status" value="1"/>
</dbReference>
<dbReference type="Gene3D" id="3.30.200.20">
    <property type="entry name" value="Phosphorylase Kinase, domain 1"/>
    <property type="match status" value="1"/>
</dbReference>
<dbReference type="Gene3D" id="1.25.40.10">
    <property type="entry name" value="Tetratricopeptide repeat domain"/>
    <property type="match status" value="1"/>
</dbReference>
<dbReference type="Gene3D" id="1.10.510.10">
    <property type="entry name" value="Transferase(Phosphotransferase) domain 1"/>
    <property type="match status" value="1"/>
</dbReference>
<dbReference type="InterPro" id="IPR045845">
    <property type="entry name" value="BSK"/>
</dbReference>
<dbReference type="InterPro" id="IPR011009">
    <property type="entry name" value="Kinase-like_dom_sf"/>
</dbReference>
<dbReference type="InterPro" id="IPR000719">
    <property type="entry name" value="Prot_kinase_dom"/>
</dbReference>
<dbReference type="InterPro" id="IPR001245">
    <property type="entry name" value="Ser-Thr/Tyr_kinase_cat_dom"/>
</dbReference>
<dbReference type="InterPro" id="IPR011990">
    <property type="entry name" value="TPR-like_helical_dom_sf"/>
</dbReference>
<dbReference type="PANTHER" id="PTHR45863">
    <property type="entry name" value="SERINE/THREONINE-PROTEIN KINASE BSK5"/>
    <property type="match status" value="1"/>
</dbReference>
<dbReference type="PANTHER" id="PTHR45863:SF47">
    <property type="entry name" value="SERINE_THREONINE-PROTEIN KINASE BSK3"/>
    <property type="match status" value="1"/>
</dbReference>
<dbReference type="Pfam" id="PF07714">
    <property type="entry name" value="PK_Tyr_Ser-Thr"/>
    <property type="match status" value="1"/>
</dbReference>
<dbReference type="SUPFAM" id="SSF56112">
    <property type="entry name" value="Protein kinase-like (PK-like)"/>
    <property type="match status" value="1"/>
</dbReference>
<dbReference type="SUPFAM" id="SSF48452">
    <property type="entry name" value="TPR-like"/>
    <property type="match status" value="1"/>
</dbReference>
<dbReference type="PROSITE" id="PS50011">
    <property type="entry name" value="PROTEIN_KINASE_DOM"/>
    <property type="match status" value="1"/>
</dbReference>
<evidence type="ECO:0000250" key="1">
    <source>
        <dbReference type="UniProtKB" id="Q944A7"/>
    </source>
</evidence>
<evidence type="ECO:0000255" key="2">
    <source>
        <dbReference type="PROSITE-ProRule" id="PRU00159"/>
    </source>
</evidence>
<evidence type="ECO:0000269" key="3">
    <source>
    </source>
</evidence>
<evidence type="ECO:0000269" key="4">
    <source>
    </source>
</evidence>
<evidence type="ECO:0000269" key="5">
    <source>
    </source>
</evidence>
<evidence type="ECO:0000303" key="6">
    <source>
    </source>
</evidence>
<evidence type="ECO:0000305" key="7"/>
<evidence type="ECO:0000305" key="8">
    <source>
    </source>
</evidence>
<evidence type="ECO:0000312" key="9">
    <source>
        <dbReference type="Araport" id="AT4G00710"/>
    </source>
</evidence>
<evidence type="ECO:0000312" key="10">
    <source>
        <dbReference type="EMBL" id="AAL32573.1"/>
    </source>
</evidence>
<protein>
    <recommendedName>
        <fullName evidence="7">Serine/threonine-protein kinase BSK3</fullName>
        <ecNumber evidence="7">2.7.11.1</ecNumber>
    </recommendedName>
    <alternativeName>
        <fullName evidence="6">Brassinosteroid-signaling kinase 3</fullName>
    </alternativeName>
</protein>
<feature type="initiator methionine" description="Removed" evidence="3">
    <location>
        <position position="1"/>
    </location>
</feature>
<feature type="chain" id="PRO_0000443233" description="Serine/threonine-protein kinase BSK3">
    <location>
        <begin position="2"/>
        <end position="489"/>
    </location>
</feature>
<feature type="domain" description="Protein kinase" evidence="2">
    <location>
        <begin position="58"/>
        <end position="324"/>
    </location>
</feature>
<feature type="active site" description="Proton acceptor" evidence="2">
    <location>
        <position position="180"/>
    </location>
</feature>
<feature type="binding site" evidence="2">
    <location>
        <begin position="64"/>
        <end position="72"/>
    </location>
    <ligand>
        <name>ATP</name>
        <dbReference type="ChEBI" id="CHEBI:30616"/>
    </ligand>
</feature>
<feature type="binding site" evidence="2">
    <location>
        <position position="86"/>
    </location>
    <ligand>
        <name>ATP</name>
        <dbReference type="ChEBI" id="CHEBI:30616"/>
    </ligand>
</feature>
<feature type="modified residue" description="Phosphoserine" evidence="1">
    <location>
        <position position="212"/>
    </location>
</feature>
<feature type="lipid moiety-binding region" description="N-myristoyl glycine" evidence="3">
    <location>
        <position position="2"/>
    </location>
</feature>
<proteinExistence type="evidence at protein level"/>
<sequence>MGGQCSSLSCCRNTSHKTAVLEAPDVDNGESSEITDVPNFREYTLEQLKAATSGFAVEYIVSEHGEKAPNVVYKGKLENQKKIAVKRFTRMAWPDSRQFLEEARSVGQLRSERMANLLGCCCEGDERLLVAEFMPNETLAKHLFHWETQPMKWTMRLRVVLYLAQALEYCTSKGRTLYHDLNAYRVLFDEECNPRLSTFGLMKNSRDGKSYSTNLAFTPPEYLRTGRITPESVIYSFGTLLLDLLSGKHIPPSHALDLIRDRNLQTLTDSCLDGQFSDSDGTELVRLASRCLQYEARERPNTKSLVTALTPLQKETEVLSHVLMGLPHSGSVSPLSPLGEACSRRDLTAMLEILEKLGYKDDEGVTNELSFHMWTDQMQESLNSKKKGDVAFRQKDFREAIECYTQFIDGGMISPTVCARRSLCYLMSDMPKEALDDAIQAQVISPVWHVASYLQSASLGILGMEKESQIALKEGSNLEAKMNGVPRVK</sequence>
<keyword id="KW-0067">ATP-binding</keyword>
<keyword id="KW-1070">Brassinosteroid signaling pathway</keyword>
<keyword id="KW-1003">Cell membrane</keyword>
<keyword id="KW-0418">Kinase</keyword>
<keyword id="KW-0449">Lipoprotein</keyword>
<keyword id="KW-0472">Membrane</keyword>
<keyword id="KW-0519">Myristate</keyword>
<keyword id="KW-0547">Nucleotide-binding</keyword>
<keyword id="KW-0597">Phosphoprotein</keyword>
<keyword id="KW-1185">Reference proteome</keyword>
<keyword id="KW-0723">Serine/threonine-protein kinase</keyword>
<keyword id="KW-0808">Transferase</keyword>
<reference key="1">
    <citation type="journal article" date="1999" name="Nature">
        <title>Sequence and analysis of chromosome 4 of the plant Arabidopsis thaliana.</title>
        <authorList>
            <person name="Mayer K.F.X."/>
            <person name="Schueller C."/>
            <person name="Wambutt R."/>
            <person name="Murphy G."/>
            <person name="Volckaert G."/>
            <person name="Pohl T."/>
            <person name="Duesterhoeft A."/>
            <person name="Stiekema W."/>
            <person name="Entian K.-D."/>
            <person name="Terryn N."/>
            <person name="Harris B."/>
            <person name="Ansorge W."/>
            <person name="Brandt P."/>
            <person name="Grivell L.A."/>
            <person name="Rieger M."/>
            <person name="Weichselgartner M."/>
            <person name="de Simone V."/>
            <person name="Obermaier B."/>
            <person name="Mache R."/>
            <person name="Mueller M."/>
            <person name="Kreis M."/>
            <person name="Delseny M."/>
            <person name="Puigdomenech P."/>
            <person name="Watson M."/>
            <person name="Schmidtheini T."/>
            <person name="Reichert B."/>
            <person name="Portetelle D."/>
            <person name="Perez-Alonso M."/>
            <person name="Boutry M."/>
            <person name="Bancroft I."/>
            <person name="Vos P."/>
            <person name="Hoheisel J."/>
            <person name="Zimmermann W."/>
            <person name="Wedler H."/>
            <person name="Ridley P."/>
            <person name="Langham S.-A."/>
            <person name="McCullagh B."/>
            <person name="Bilham L."/>
            <person name="Robben J."/>
            <person name="van der Schueren J."/>
            <person name="Grymonprez B."/>
            <person name="Chuang Y.-J."/>
            <person name="Vandenbussche F."/>
            <person name="Braeken M."/>
            <person name="Weltjens I."/>
            <person name="Voet M."/>
            <person name="Bastiaens I."/>
            <person name="Aert R."/>
            <person name="Defoor E."/>
            <person name="Weitzenegger T."/>
            <person name="Bothe G."/>
            <person name="Ramsperger U."/>
            <person name="Hilbert H."/>
            <person name="Braun M."/>
            <person name="Holzer E."/>
            <person name="Brandt A."/>
            <person name="Peters S."/>
            <person name="van Staveren M."/>
            <person name="Dirkse W."/>
            <person name="Mooijman P."/>
            <person name="Klein Lankhorst R."/>
            <person name="Rose M."/>
            <person name="Hauf J."/>
            <person name="Koetter P."/>
            <person name="Berneiser S."/>
            <person name="Hempel S."/>
            <person name="Feldpausch M."/>
            <person name="Lamberth S."/>
            <person name="Van den Daele H."/>
            <person name="De Keyser A."/>
            <person name="Buysshaert C."/>
            <person name="Gielen J."/>
            <person name="Villarroel R."/>
            <person name="De Clercq R."/>
            <person name="van Montagu M."/>
            <person name="Rogers J."/>
            <person name="Cronin A."/>
            <person name="Quail M.A."/>
            <person name="Bray-Allen S."/>
            <person name="Clark L."/>
            <person name="Doggett J."/>
            <person name="Hall S."/>
            <person name="Kay M."/>
            <person name="Lennard N."/>
            <person name="McLay K."/>
            <person name="Mayes R."/>
            <person name="Pettett A."/>
            <person name="Rajandream M.A."/>
            <person name="Lyne M."/>
            <person name="Benes V."/>
            <person name="Rechmann S."/>
            <person name="Borkova D."/>
            <person name="Bloecker H."/>
            <person name="Scharfe M."/>
            <person name="Grimm M."/>
            <person name="Loehnert T.-H."/>
            <person name="Dose S."/>
            <person name="de Haan M."/>
            <person name="Maarse A.C."/>
            <person name="Schaefer M."/>
            <person name="Mueller-Auer S."/>
            <person name="Gabel C."/>
            <person name="Fuchs M."/>
            <person name="Fartmann B."/>
            <person name="Granderath K."/>
            <person name="Dauner D."/>
            <person name="Herzl A."/>
            <person name="Neumann S."/>
            <person name="Argiriou A."/>
            <person name="Vitale D."/>
            <person name="Liguori R."/>
            <person name="Piravandi E."/>
            <person name="Massenet O."/>
            <person name="Quigley F."/>
            <person name="Clabauld G."/>
            <person name="Muendlein A."/>
            <person name="Felber R."/>
            <person name="Schnabl S."/>
            <person name="Hiller R."/>
            <person name="Schmidt W."/>
            <person name="Lecharny A."/>
            <person name="Aubourg S."/>
            <person name="Chefdor F."/>
            <person name="Cooke R."/>
            <person name="Berger C."/>
            <person name="Monfort A."/>
            <person name="Casacuberta E."/>
            <person name="Gibbons T."/>
            <person name="Weber N."/>
            <person name="Vandenbol M."/>
            <person name="Bargues M."/>
            <person name="Terol J."/>
            <person name="Torres A."/>
            <person name="Perez-Perez A."/>
            <person name="Purnelle B."/>
            <person name="Bent E."/>
            <person name="Johnson S."/>
            <person name="Tacon D."/>
            <person name="Jesse T."/>
            <person name="Heijnen L."/>
            <person name="Schwarz S."/>
            <person name="Scholler P."/>
            <person name="Heber S."/>
            <person name="Francs P."/>
            <person name="Bielke C."/>
            <person name="Frishman D."/>
            <person name="Haase D."/>
            <person name="Lemcke K."/>
            <person name="Mewes H.-W."/>
            <person name="Stocker S."/>
            <person name="Zaccaria P."/>
            <person name="Bevan M."/>
            <person name="Wilson R.K."/>
            <person name="de la Bastide M."/>
            <person name="Habermann K."/>
            <person name="Parnell L."/>
            <person name="Dedhia N."/>
            <person name="Gnoj L."/>
            <person name="Schutz K."/>
            <person name="Huang E."/>
            <person name="Spiegel L."/>
            <person name="Sekhon M."/>
            <person name="Murray J."/>
            <person name="Sheet P."/>
            <person name="Cordes M."/>
            <person name="Abu-Threideh J."/>
            <person name="Stoneking T."/>
            <person name="Kalicki J."/>
            <person name="Graves T."/>
            <person name="Harmon G."/>
            <person name="Edwards J."/>
            <person name="Latreille P."/>
            <person name="Courtney L."/>
            <person name="Cloud J."/>
            <person name="Abbott A."/>
            <person name="Scott K."/>
            <person name="Johnson D."/>
            <person name="Minx P."/>
            <person name="Bentley D."/>
            <person name="Fulton B."/>
            <person name="Miller N."/>
            <person name="Greco T."/>
            <person name="Kemp K."/>
            <person name="Kramer J."/>
            <person name="Fulton L."/>
            <person name="Mardis E."/>
            <person name="Dante M."/>
            <person name="Pepin K."/>
            <person name="Hillier L.W."/>
            <person name="Nelson J."/>
            <person name="Spieth J."/>
            <person name="Ryan E."/>
            <person name="Andrews S."/>
            <person name="Geisel C."/>
            <person name="Layman D."/>
            <person name="Du H."/>
            <person name="Ali J."/>
            <person name="Berghoff A."/>
            <person name="Jones K."/>
            <person name="Drone K."/>
            <person name="Cotton M."/>
            <person name="Joshu C."/>
            <person name="Antonoiu B."/>
            <person name="Zidanic M."/>
            <person name="Strong C."/>
            <person name="Sun H."/>
            <person name="Lamar B."/>
            <person name="Yordan C."/>
            <person name="Ma P."/>
            <person name="Zhong J."/>
            <person name="Preston R."/>
            <person name="Vil D."/>
            <person name="Shekher M."/>
            <person name="Matero A."/>
            <person name="Shah R."/>
            <person name="Swaby I.K."/>
            <person name="O'Shaughnessy A."/>
            <person name="Rodriguez M."/>
            <person name="Hoffman J."/>
            <person name="Till S."/>
            <person name="Granat S."/>
            <person name="Shohdy N."/>
            <person name="Hasegawa A."/>
            <person name="Hameed A."/>
            <person name="Lodhi M."/>
            <person name="Johnson A."/>
            <person name="Chen E."/>
            <person name="Marra M.A."/>
            <person name="Martienssen R."/>
            <person name="McCombie W.R."/>
        </authorList>
    </citation>
    <scope>NUCLEOTIDE SEQUENCE [LARGE SCALE GENOMIC DNA]</scope>
    <source>
        <strain>cv. Columbia</strain>
    </source>
</reference>
<reference key="2">
    <citation type="journal article" date="2017" name="Plant J.">
        <title>Araport11: a complete reannotation of the Arabidopsis thaliana reference genome.</title>
        <authorList>
            <person name="Cheng C.Y."/>
            <person name="Krishnakumar V."/>
            <person name="Chan A.P."/>
            <person name="Thibaud-Nissen F."/>
            <person name="Schobel S."/>
            <person name="Town C.D."/>
        </authorList>
    </citation>
    <scope>GENOME REANNOTATION</scope>
    <source>
        <strain>cv. Columbia</strain>
    </source>
</reference>
<reference key="3">
    <citation type="journal article" date="2003" name="Science">
        <title>Empirical analysis of transcriptional activity in the Arabidopsis genome.</title>
        <authorList>
            <person name="Yamada K."/>
            <person name="Lim J."/>
            <person name="Dale J.M."/>
            <person name="Chen H."/>
            <person name="Shinn P."/>
            <person name="Palm C.J."/>
            <person name="Southwick A.M."/>
            <person name="Wu H.C."/>
            <person name="Kim C.J."/>
            <person name="Nguyen M."/>
            <person name="Pham P.K."/>
            <person name="Cheuk R.F."/>
            <person name="Karlin-Newmann G."/>
            <person name="Liu S.X."/>
            <person name="Lam B."/>
            <person name="Sakano H."/>
            <person name="Wu T."/>
            <person name="Yu G."/>
            <person name="Miranda M."/>
            <person name="Quach H.L."/>
            <person name="Tripp M."/>
            <person name="Chang C.H."/>
            <person name="Lee J.M."/>
            <person name="Toriumi M.J."/>
            <person name="Chan M.M."/>
            <person name="Tang C.C."/>
            <person name="Onodera C.S."/>
            <person name="Deng J.M."/>
            <person name="Akiyama K."/>
            <person name="Ansari Y."/>
            <person name="Arakawa T."/>
            <person name="Banh J."/>
            <person name="Banno F."/>
            <person name="Bowser L."/>
            <person name="Brooks S.Y."/>
            <person name="Carninci P."/>
            <person name="Chao Q."/>
            <person name="Choy N."/>
            <person name="Enju A."/>
            <person name="Goldsmith A.D."/>
            <person name="Gurjal M."/>
            <person name="Hansen N.F."/>
            <person name="Hayashizaki Y."/>
            <person name="Johnson-Hopson C."/>
            <person name="Hsuan V.W."/>
            <person name="Iida K."/>
            <person name="Karnes M."/>
            <person name="Khan S."/>
            <person name="Koesema E."/>
            <person name="Ishida J."/>
            <person name="Jiang P.X."/>
            <person name="Jones T."/>
            <person name="Kawai J."/>
            <person name="Kamiya A."/>
            <person name="Meyers C."/>
            <person name="Nakajima M."/>
            <person name="Narusaka M."/>
            <person name="Seki M."/>
            <person name="Sakurai T."/>
            <person name="Satou M."/>
            <person name="Tamse R."/>
            <person name="Vaysberg M."/>
            <person name="Wallender E.K."/>
            <person name="Wong C."/>
            <person name="Yamamura Y."/>
            <person name="Yuan S."/>
            <person name="Shinozaki K."/>
            <person name="Davis R.W."/>
            <person name="Theologis A."/>
            <person name="Ecker J.R."/>
        </authorList>
    </citation>
    <scope>NUCLEOTIDE SEQUENCE [LARGE SCALE MRNA]</scope>
    <source>
        <strain>cv. Columbia</strain>
    </source>
</reference>
<reference key="4">
    <citation type="journal article" date="2003" name="J. Biol. Chem.">
        <title>Unexpected protein families including cell defense components feature in the N-myristoylome of a higher eukaryote.</title>
        <authorList>
            <person name="Boisson B."/>
            <person name="Giglione C."/>
            <person name="Meinnel T."/>
        </authorList>
    </citation>
    <scope>MYRISTOYLATION AT GLY-2</scope>
</reference>
<reference key="5">
    <citation type="journal article" date="2008" name="Science">
        <title>BSKs mediate signal transduction from the receptor kinase BRI1 in Arabidopsis.</title>
        <authorList>
            <person name="Tang W."/>
            <person name="Kim T.W."/>
            <person name="Oses-Prieto J.A."/>
            <person name="Sun Y."/>
            <person name="Deng Z."/>
            <person name="Zhu S."/>
            <person name="Wang R."/>
            <person name="Burlingame A.L."/>
            <person name="Wang Z.Y."/>
        </authorList>
    </citation>
    <scope>FUNCTION</scope>
    <scope>INTERACTION WITH BRI1</scope>
    <scope>SUBCELLULAR LOCATION</scope>
    <scope>PHOSPHORYLATION</scope>
</reference>
<reference key="6">
    <citation type="journal article" date="2013" name="Plant J.">
        <title>BSKs are partially redundant positive regulators of brassinosteroid signaling in Arabidopsis.</title>
        <authorList>
            <person name="Sreeramulu S."/>
            <person name="Mostizky Y."/>
            <person name="Sunitha S."/>
            <person name="Shani E."/>
            <person name="Nahum H."/>
            <person name="Salomon D."/>
            <person name="Hayun L.B."/>
            <person name="Gruetter C."/>
            <person name="Rauh D."/>
            <person name="Ori N."/>
            <person name="Sessa G."/>
        </authorList>
    </citation>
    <scope>FUNCTION</scope>
    <scope>PHOSPHORYLATION</scope>
</reference>
<gene>
    <name evidence="6" type="primary">BSK3</name>
    <name evidence="9" type="ordered locus">At4g00710</name>
    <name evidence="10" type="ORF">F6N23.9</name>
</gene>
<organism>
    <name type="scientific">Arabidopsis thaliana</name>
    <name type="common">Mouse-ear cress</name>
    <dbReference type="NCBI Taxonomy" id="3702"/>
    <lineage>
        <taxon>Eukaryota</taxon>
        <taxon>Viridiplantae</taxon>
        <taxon>Streptophyta</taxon>
        <taxon>Embryophyta</taxon>
        <taxon>Tracheophyta</taxon>
        <taxon>Spermatophyta</taxon>
        <taxon>Magnoliopsida</taxon>
        <taxon>eudicotyledons</taxon>
        <taxon>Gunneridae</taxon>
        <taxon>Pentapetalae</taxon>
        <taxon>rosids</taxon>
        <taxon>malvids</taxon>
        <taxon>Brassicales</taxon>
        <taxon>Brassicaceae</taxon>
        <taxon>Camelineae</taxon>
        <taxon>Arabidopsis</taxon>
    </lineage>
</organism>
<comment type="function">
    <text evidence="4 5">Probable serine/threonine kinase that acts as a positive regulator of brassinosteroid (BR) signaling downstream of the receptor kinase BRI1. Mediates signal transduction from BRI1 by functioning as substrate of BRI1 (PubMed:18653891). Functions redundantly with BSK4, BSK6, BSK7 and BSK8 (PubMed:23496207).</text>
</comment>
<comment type="catalytic activity">
    <reaction evidence="7">
        <text>L-seryl-[protein] + ATP = O-phospho-L-seryl-[protein] + ADP + H(+)</text>
        <dbReference type="Rhea" id="RHEA:17989"/>
        <dbReference type="Rhea" id="RHEA-COMP:9863"/>
        <dbReference type="Rhea" id="RHEA-COMP:11604"/>
        <dbReference type="ChEBI" id="CHEBI:15378"/>
        <dbReference type="ChEBI" id="CHEBI:29999"/>
        <dbReference type="ChEBI" id="CHEBI:30616"/>
        <dbReference type="ChEBI" id="CHEBI:83421"/>
        <dbReference type="ChEBI" id="CHEBI:456216"/>
        <dbReference type="EC" id="2.7.11.1"/>
    </reaction>
</comment>
<comment type="catalytic activity">
    <reaction evidence="7">
        <text>L-threonyl-[protein] + ATP = O-phospho-L-threonyl-[protein] + ADP + H(+)</text>
        <dbReference type="Rhea" id="RHEA:46608"/>
        <dbReference type="Rhea" id="RHEA-COMP:11060"/>
        <dbReference type="Rhea" id="RHEA-COMP:11605"/>
        <dbReference type="ChEBI" id="CHEBI:15378"/>
        <dbReference type="ChEBI" id="CHEBI:30013"/>
        <dbReference type="ChEBI" id="CHEBI:30616"/>
        <dbReference type="ChEBI" id="CHEBI:61977"/>
        <dbReference type="ChEBI" id="CHEBI:456216"/>
        <dbReference type="EC" id="2.7.11.1"/>
    </reaction>
</comment>
<comment type="subunit">
    <text evidence="4 5">Interacts with BRI1.</text>
</comment>
<comment type="interaction">
    <interactant intactId="EBI-1797930">
        <id>Q8W4L3</id>
    </interactant>
    <interactant intactId="EBI-1797828">
        <id>O22476</id>
        <label>BRI1</label>
    </interactant>
    <organismsDiffer>false</organismsDiffer>
    <experiments>2</experiments>
</comment>
<comment type="subcellular location">
    <subcellularLocation>
        <location evidence="4">Cell membrane</location>
        <topology evidence="8">Lipid-anchor</topology>
    </subcellularLocation>
</comment>
<comment type="PTM">
    <text evidence="4 5">Phosphorylated by BRI1 upon brassinolide (BL) treatment (PubMed:18653891). Phosphorylated by ASK7/BIN2 and ASK9/BIL2 (PubMed:23496207).</text>
</comment>
<comment type="similarity">
    <text evidence="7">Belongs to the protein kinase superfamily. Ser/Thr protein kinase family.</text>
</comment>
<comment type="sequence caution" evidence="7">
    <conflict type="erroneous gene model prediction">
        <sequence resource="EMBL-CDS" id="AAC13615"/>
    </conflict>
</comment>
<comment type="sequence caution" evidence="7">
    <conflict type="erroneous gene model prediction">
        <sequence resource="EMBL-CDS" id="CAB80880"/>
    </conflict>
</comment>
<name>BSK3_ARATH</name>